<geneLocation type="chloroplast"/>
<evidence type="ECO:0000269" key="1">
    <source>
    </source>
</evidence>
<evidence type="ECO:0000269" key="2">
    <source>
    </source>
</evidence>
<evidence type="ECO:0000269" key="3">
    <source ref="1"/>
</evidence>
<evidence type="ECO:0000305" key="4"/>
<evidence type="ECO:0007744" key="5">
    <source>
        <dbReference type="PDB" id="1PHN"/>
    </source>
</evidence>
<evidence type="ECO:0007744" key="6">
    <source>
        <dbReference type="PDB" id="3BRP"/>
    </source>
</evidence>
<evidence type="ECO:0007744" key="7">
    <source>
        <dbReference type="PDB" id="3KVS"/>
    </source>
</evidence>
<evidence type="ECO:0007829" key="8">
    <source>
        <dbReference type="PDB" id="3KVS"/>
    </source>
</evidence>
<protein>
    <recommendedName>
        <fullName>C-phycocyanin alpha chain</fullName>
    </recommendedName>
</protein>
<gene>
    <name type="primary">cpcA</name>
</gene>
<sequence>MKTPITEAIAAADNQGRFLSNTELQAVNGRYQRAAASLEAARSLTSNAERLINGAAQAVYSKFPYTSQMPGPQYASSAVGKAKCARDIGYYLRMVTYCLVVGGTGPMDEYLIAGLEEINRTFDLSPSWYVEALNYIKANHGLSGQAANEANTYIDYAINALS</sequence>
<organism>
    <name type="scientific">Galdieria sulphuraria</name>
    <name type="common">Red alga</name>
    <dbReference type="NCBI Taxonomy" id="130081"/>
    <lineage>
        <taxon>Eukaryota</taxon>
        <taxon>Rhodophyta</taxon>
        <taxon>Bangiophyceae</taxon>
        <taxon>Galdieriales</taxon>
        <taxon>Galdieriaceae</taxon>
        <taxon>Galdieria</taxon>
    </lineage>
</organism>
<name>PHCA_GALSU</name>
<dbReference type="EMBL" id="S77125">
    <property type="protein sequence ID" value="AAB34028.1"/>
    <property type="molecule type" value="mRNA"/>
</dbReference>
<dbReference type="EMBL" id="L13467">
    <property type="protein sequence ID" value="AAB01593.1"/>
    <property type="molecule type" value="Genomic_DNA"/>
</dbReference>
<dbReference type="PDB" id="1PHN">
    <property type="method" value="X-ray"/>
    <property type="resolution" value="1.65 A"/>
    <property type="chains" value="A=1-162"/>
</dbReference>
<dbReference type="PDB" id="3BRP">
    <property type="method" value="X-ray"/>
    <property type="resolution" value="1.85 A"/>
    <property type="chains" value="A=1-162"/>
</dbReference>
<dbReference type="PDB" id="3KVS">
    <property type="method" value="X-ray"/>
    <property type="resolution" value="1.50 A"/>
    <property type="chains" value="A=1-162"/>
</dbReference>
<dbReference type="PDBsum" id="1PHN"/>
<dbReference type="PDBsum" id="3BRP"/>
<dbReference type="PDBsum" id="3KVS"/>
<dbReference type="SMR" id="P00306"/>
<dbReference type="MINT" id="P00306"/>
<dbReference type="EvolutionaryTrace" id="P00306"/>
<dbReference type="GO" id="GO:0009535">
    <property type="term" value="C:chloroplast thylakoid membrane"/>
    <property type="evidence" value="ECO:0007669"/>
    <property type="project" value="UniProtKB-SubCell"/>
</dbReference>
<dbReference type="GO" id="GO:0030089">
    <property type="term" value="C:phycobilisome"/>
    <property type="evidence" value="ECO:0007669"/>
    <property type="project" value="UniProtKB-KW"/>
</dbReference>
<dbReference type="GO" id="GO:0015979">
    <property type="term" value="P:photosynthesis"/>
    <property type="evidence" value="ECO:0007669"/>
    <property type="project" value="UniProtKB-KW"/>
</dbReference>
<dbReference type="CDD" id="cd14770">
    <property type="entry name" value="PC-PEC_alpha"/>
    <property type="match status" value="1"/>
</dbReference>
<dbReference type="Gene3D" id="1.10.490.20">
    <property type="entry name" value="Phycocyanins"/>
    <property type="match status" value="1"/>
</dbReference>
<dbReference type="InterPro" id="IPR009050">
    <property type="entry name" value="Globin-like_sf"/>
</dbReference>
<dbReference type="InterPro" id="IPR012128">
    <property type="entry name" value="Phycobilisome_asu/bsu"/>
</dbReference>
<dbReference type="InterPro" id="IPR038719">
    <property type="entry name" value="Phycobilisome_asu/bsu_sf"/>
</dbReference>
<dbReference type="InterPro" id="IPR006246">
    <property type="entry name" value="Phycocyanin_a"/>
</dbReference>
<dbReference type="NCBIfam" id="TIGR01338">
    <property type="entry name" value="phycocy_alpha"/>
    <property type="match status" value="1"/>
</dbReference>
<dbReference type="PANTHER" id="PTHR34011:SF4">
    <property type="entry name" value="C-PHYCOCYANIN ALPHA SUBUNIT"/>
    <property type="match status" value="1"/>
</dbReference>
<dbReference type="PANTHER" id="PTHR34011">
    <property type="entry name" value="PHYCOBILISOME 32.1 KDA LINKER POLYPEPTIDE, PHYCOCYANIN-ASSOCIATED, ROD 2-RELATED"/>
    <property type="match status" value="1"/>
</dbReference>
<dbReference type="Pfam" id="PF00502">
    <property type="entry name" value="Phycobilisome"/>
    <property type="match status" value="1"/>
</dbReference>
<dbReference type="PIRSF" id="PIRSF000081">
    <property type="entry name" value="Phycocyanin"/>
    <property type="match status" value="1"/>
</dbReference>
<dbReference type="SUPFAM" id="SSF46458">
    <property type="entry name" value="Globin-like"/>
    <property type="match status" value="1"/>
</dbReference>
<reference key="1">
    <citation type="journal article" date="1979" name="Fed. Proc.">
        <title>Amino acid sequence of the phycocyanin alpha subunit from the alga, Cyanidium caldarium.</title>
        <authorList>
            <person name="Troxler R.F."/>
            <person name="Brown A.S."/>
        </authorList>
    </citation>
    <scope>PROTEIN SEQUENCE</scope>
    <scope>SUBUNIT</scope>
</reference>
<reference key="2">
    <citation type="journal article" date="1981" name="J. Biol. Chem.">
        <title>Primary structure of phycocyanin from the unicellular rhodophyte Cyanidium caldarium. I. Complete amino acid sequence of the alpha subunit.</title>
        <authorList>
            <person name="Offner G.D."/>
            <person name="Brown-Mason A.S."/>
            <person name="Ehrhardt M.M."/>
            <person name="Troxler R.F."/>
        </authorList>
    </citation>
    <scope>PROTEIN SEQUENCE</scope>
</reference>
<reference key="3">
    <citation type="journal article" date="1995" name="Plant Physiol.">
        <title>Nucleotide sequence and expression of the genes for the alpha and beta subunits of phycocyanin in Cyanidium caldarium.</title>
        <authorList>
            <person name="Troxler R.F."/>
            <person name="Yan Y."/>
            <person name="Jiang J.W."/>
            <person name="Liu B."/>
        </authorList>
    </citation>
    <scope>NUCLEOTIDE SEQUENCE [MRNA]</scope>
    <source>
        <strain>III-D-2</strain>
    </source>
</reference>
<reference key="4">
    <citation type="submission" date="1993-07" db="EMBL/GenBank/DDBJ databases">
        <title>Heme regulated photogenes in the unicellular rhodophyte, Cyanidium caldarium. Cloning and nucleotide sequence of genes for phycocyanin.</title>
        <authorList>
            <person name="Troxler R.F."/>
            <person name="Yan Y."/>
            <person name="Zhang F."/>
            <person name="Jiang J.-W."/>
        </authorList>
    </citation>
    <scope>NUCLEOTIDE SEQUENCE [GENOMIC DNA]</scope>
    <source>
        <strain>III-D-2</strain>
    </source>
</reference>
<reference key="5">
    <citation type="journal article" date="1979" name="J. Biol. Chem.">
        <title>Phycobilin-apoprotein linkages in the alpha and beta subunits of phycocyanin from the unicellular rhodophyte, Cyanidium caldarium. Amino acid sequences of 35S-labeled chromopeptides.</title>
        <authorList>
            <person name="Brown A.S."/>
            <person name="Offner G.D."/>
            <person name="Ehrhardt M.M."/>
            <person name="Troxler R.F."/>
        </authorList>
    </citation>
    <scope>PROTEIN SEQUENCE OF 70-94</scope>
    <scope>SUBUNIT</scope>
    <scope>CHROMOPHORE ATTACHMENT AT CYS-84</scope>
    <source>
        <strain>Allen</strain>
    </source>
</reference>
<reference evidence="5" key="6">
    <citation type="journal article" date="1999" name="Biophys. J.">
        <title>Crystal structure of C-phycocyanin from Cyanidium caldarium provides a new perspective on phycobilisome assembly.</title>
        <authorList>
            <person name="Stec B."/>
            <person name="Troxler R.F."/>
            <person name="Teeter M.M."/>
        </authorList>
    </citation>
    <scope>X-RAY CRYSTALLOGRAPHY (1.65 ANGSTROMS) IN COMPLEX WITH CPCB AND PHYCOCYANOBILIN</scope>
    <scope>SUBUNIT</scope>
</reference>
<reference evidence="6" key="7">
    <citation type="submission" date="2007-12" db="PDB data bank">
        <title>Crystal Structure of C-Phycocyanin from Galdieria sulphuraria at 1.85 A.</title>
        <authorList>
            <person name="Fromme R."/>
            <person name="Thangaraj B."/>
            <person name="Vanselow C."/>
            <person name="Fromme P."/>
        </authorList>
    </citation>
    <scope>X-RAY CRYSTALLOGRAPHY (1.85 ANGSTROMS)</scope>
</reference>
<reference evidence="7" key="8">
    <citation type="submission" date="2009-11" db="PDB data bank">
        <title>High resolution structure of C-Phycocyanin from Galdieria sulphuraria reveals new insights of the Phycobilisome.</title>
        <authorList>
            <person name="Fromme R."/>
            <person name="Thangaraj B."/>
            <person name="Vanselow C."/>
            <person name="Fromme P."/>
        </authorList>
    </citation>
    <scope>X-RAY CRYSTALLOGRAPHY (1.50 ANGSTROMS)</scope>
</reference>
<feature type="chain" id="PRO_0000199121" description="C-phycocyanin alpha chain">
    <location>
        <begin position="1"/>
        <end position="162"/>
    </location>
</feature>
<feature type="binding site">
    <location>
        <begin position="72"/>
        <end position="75"/>
    </location>
    <ligand>
        <name>(2R,3E)-phycocyanobilin</name>
        <dbReference type="ChEBI" id="CHEBI:85275"/>
    </ligand>
</feature>
<feature type="binding site">
    <location>
        <begin position="83"/>
        <end position="87"/>
    </location>
    <ligand>
        <name>(2R,3E)-phycocyanobilin</name>
        <dbReference type="ChEBI" id="CHEBI:85275"/>
    </ligand>
</feature>
<feature type="binding site" description="covalent" evidence="1 2 5">
    <location>
        <position position="84"/>
    </location>
    <ligand>
        <name>(2R,3E)-phycocyanobilin</name>
        <dbReference type="ChEBI" id="CHEBI:85275"/>
    </ligand>
</feature>
<feature type="binding site" evidence="1">
    <location>
        <position position="128"/>
    </location>
    <ligand>
        <name>(2R,3E)-phycocyanobilin</name>
        <dbReference type="ChEBI" id="CHEBI:85275"/>
    </ligand>
</feature>
<feature type="sequence conflict" description="In Ref. 4; AAB01593." evidence="4" ref="4">
    <original>E</original>
    <variation>Q</variation>
    <location>
        <position position="49"/>
    </location>
</feature>
<feature type="sequence conflict" description="In Ref. 1; AA sequence." evidence="4" ref="1">
    <original>S</original>
    <variation>Q</variation>
    <location>
        <position position="61"/>
    </location>
</feature>
<feature type="sequence conflict" description="In Ref. 1; AA sequence." evidence="4" ref="1">
    <original>V</original>
    <variation>I</variation>
    <location>
        <position position="95"/>
    </location>
</feature>
<feature type="sequence conflict" description="In Ref. 1; AA sequence." evidence="4" ref="1">
    <original>V</original>
    <variation>A</variation>
    <location>
        <position position="101"/>
    </location>
</feature>
<feature type="helix" evidence="8">
    <location>
        <begin position="4"/>
        <end position="14"/>
    </location>
</feature>
<feature type="helix" evidence="8">
    <location>
        <begin position="21"/>
        <end position="46"/>
    </location>
</feature>
<feature type="helix" evidence="8">
    <location>
        <begin position="48"/>
        <end position="62"/>
    </location>
</feature>
<feature type="helix" evidence="8">
    <location>
        <begin position="64"/>
        <end position="67"/>
    </location>
</feature>
<feature type="strand" evidence="8">
    <location>
        <begin position="74"/>
        <end position="77"/>
    </location>
</feature>
<feature type="helix" evidence="8">
    <location>
        <begin position="78"/>
        <end position="101"/>
    </location>
</feature>
<feature type="helix" evidence="8">
    <location>
        <begin position="105"/>
        <end position="110"/>
    </location>
</feature>
<feature type="turn" evidence="8">
    <location>
        <begin position="111"/>
        <end position="114"/>
    </location>
</feature>
<feature type="helix" evidence="8">
    <location>
        <begin position="115"/>
        <end position="121"/>
    </location>
</feature>
<feature type="helix" evidence="8">
    <location>
        <begin position="126"/>
        <end position="139"/>
    </location>
</feature>
<feature type="helix" evidence="8">
    <location>
        <begin position="144"/>
        <end position="160"/>
    </location>
</feature>
<keyword id="KW-0002">3D-structure</keyword>
<keyword id="KW-0042">Antenna complex</keyword>
<keyword id="KW-0089">Bile pigment</keyword>
<keyword id="KW-0150">Chloroplast</keyword>
<keyword id="KW-0157">Chromophore</keyword>
<keyword id="KW-0903">Direct protein sequencing</keyword>
<keyword id="KW-0249">Electron transport</keyword>
<keyword id="KW-0472">Membrane</keyword>
<keyword id="KW-0602">Photosynthesis</keyword>
<keyword id="KW-0605">Phycobilisome</keyword>
<keyword id="KW-0934">Plastid</keyword>
<keyword id="KW-0793">Thylakoid</keyword>
<keyword id="KW-0813">Transport</keyword>
<accession>P00306</accession>
<comment type="function">
    <text>Light-harvesting photosynthetic tetrapyrrole chromophore-protein from the phycobiliprotein complex (phycobilisome, PBS). Phycocyanin is the major phycobiliprotein in the PBS rod.</text>
</comment>
<comment type="subunit">
    <text evidence="1 2 3">Heterodimer of an alpha and a beta subunit (PubMed:10354419, PubMed:468790, Ref.1). Dimers further assemble into trimers and the trimers into hexamers. The basic functional unit of phycobiliproteins is a ring-shaped hexamer formed from two back-to-back trimers contacting via the alpha chain subunits. The trimers are composed of alpha/beta subunit heterodimers arranged around a three-fold axis of symmetry. The phycoerythrins also contain a gamma subunit which is located in the center of the hexamer (PubMed:10354419).</text>
</comment>
<comment type="subcellular location">
    <subcellularLocation>
        <location>Plastid</location>
        <location>Chloroplast thylakoid membrane</location>
        <topology>Peripheral membrane protein</topology>
        <orientation>Stromal side</orientation>
    </subcellularLocation>
    <text>Part of the phycobilisome rod.</text>
</comment>
<comment type="PTM">
    <text evidence="1 2">Contains one covalently linked phycocyanobilin chromophore.</text>
</comment>
<comment type="miscellaneous">
    <text>The light-harvesting antenna system in red algae and cyanobacteria is formed of phycobilisomes. These are composed of the phycobiliproteins phycoerythrin (CPE), phycocyanin (CPC) and allophycocyanin (APC). Cyanobacteria also contain phycoerythrocyanin (PCC). The phycobiliproteins all share the same subunit composition and organization with variations in the covalently bound open-chain tetrapyrrole chromophores. The phycobiliprotein complexes are arranged sequentially in antenna complexes linked by linker proteins with CPE at the periphery, CPC in the middle and APC at the core feeding to the photosynthetic reaction center.</text>
</comment>
<comment type="miscellaneous">
    <text evidence="4">Although originally identified as Cyanidium caldarium, these sequences derive from Galdieria sulphuraria.</text>
</comment>
<comment type="similarity">
    <text evidence="4">Belongs to the phycobiliprotein family.</text>
</comment>
<proteinExistence type="evidence at protein level"/>